<dbReference type="EMBL" id="AJ628730">
    <property type="protein sequence ID" value="CAF32224.1"/>
    <property type="molecule type" value="Genomic_DNA"/>
</dbReference>
<dbReference type="EMBL" id="CR954246">
    <property type="protein sequence ID" value="CAI87091.1"/>
    <property type="molecule type" value="Genomic_DNA"/>
</dbReference>
<dbReference type="SMR" id="P61330"/>
<dbReference type="STRING" id="326442.PSHAa2035"/>
<dbReference type="KEGG" id="pha:PSHAa2035"/>
<dbReference type="eggNOG" id="COG0264">
    <property type="taxonomic scope" value="Bacteria"/>
</dbReference>
<dbReference type="HOGENOM" id="CLU_047155_0_2_6"/>
<dbReference type="BioCyc" id="PHAL326442:PSHA_RS10055-MONOMER"/>
<dbReference type="Proteomes" id="UP000006843">
    <property type="component" value="Chromosome I"/>
</dbReference>
<dbReference type="GO" id="GO:0005737">
    <property type="term" value="C:cytoplasm"/>
    <property type="evidence" value="ECO:0007669"/>
    <property type="project" value="UniProtKB-SubCell"/>
</dbReference>
<dbReference type="GO" id="GO:0003746">
    <property type="term" value="F:translation elongation factor activity"/>
    <property type="evidence" value="ECO:0007669"/>
    <property type="project" value="UniProtKB-UniRule"/>
</dbReference>
<dbReference type="CDD" id="cd14275">
    <property type="entry name" value="UBA_EF-Ts"/>
    <property type="match status" value="1"/>
</dbReference>
<dbReference type="FunFam" id="1.10.286.20:FF:000001">
    <property type="entry name" value="Elongation factor Ts"/>
    <property type="match status" value="1"/>
</dbReference>
<dbReference type="FunFam" id="1.10.8.10:FF:000001">
    <property type="entry name" value="Elongation factor Ts"/>
    <property type="match status" value="1"/>
</dbReference>
<dbReference type="FunFam" id="3.30.479.20:FF:000001">
    <property type="entry name" value="Elongation factor Ts"/>
    <property type="match status" value="1"/>
</dbReference>
<dbReference type="Gene3D" id="1.10.286.20">
    <property type="match status" value="1"/>
</dbReference>
<dbReference type="Gene3D" id="1.10.8.10">
    <property type="entry name" value="DNA helicase RuvA subunit, C-terminal domain"/>
    <property type="match status" value="1"/>
</dbReference>
<dbReference type="Gene3D" id="3.30.479.20">
    <property type="entry name" value="Elongation factor Ts, dimerisation domain"/>
    <property type="match status" value="2"/>
</dbReference>
<dbReference type="HAMAP" id="MF_00050">
    <property type="entry name" value="EF_Ts"/>
    <property type="match status" value="1"/>
</dbReference>
<dbReference type="InterPro" id="IPR036402">
    <property type="entry name" value="EF-Ts_dimer_sf"/>
</dbReference>
<dbReference type="InterPro" id="IPR001816">
    <property type="entry name" value="Transl_elong_EFTs/EF1B"/>
</dbReference>
<dbReference type="InterPro" id="IPR014039">
    <property type="entry name" value="Transl_elong_EFTs/EF1B_dimer"/>
</dbReference>
<dbReference type="InterPro" id="IPR018101">
    <property type="entry name" value="Transl_elong_Ts_CS"/>
</dbReference>
<dbReference type="InterPro" id="IPR009060">
    <property type="entry name" value="UBA-like_sf"/>
</dbReference>
<dbReference type="NCBIfam" id="TIGR00116">
    <property type="entry name" value="tsf"/>
    <property type="match status" value="1"/>
</dbReference>
<dbReference type="PANTHER" id="PTHR11741">
    <property type="entry name" value="ELONGATION FACTOR TS"/>
    <property type="match status" value="1"/>
</dbReference>
<dbReference type="PANTHER" id="PTHR11741:SF0">
    <property type="entry name" value="ELONGATION FACTOR TS, MITOCHONDRIAL"/>
    <property type="match status" value="1"/>
</dbReference>
<dbReference type="Pfam" id="PF00889">
    <property type="entry name" value="EF_TS"/>
    <property type="match status" value="1"/>
</dbReference>
<dbReference type="SUPFAM" id="SSF54713">
    <property type="entry name" value="Elongation factor Ts (EF-Ts), dimerisation domain"/>
    <property type="match status" value="2"/>
</dbReference>
<dbReference type="SUPFAM" id="SSF46934">
    <property type="entry name" value="UBA-like"/>
    <property type="match status" value="1"/>
</dbReference>
<dbReference type="PROSITE" id="PS01126">
    <property type="entry name" value="EF_TS_1"/>
    <property type="match status" value="1"/>
</dbReference>
<dbReference type="PROSITE" id="PS01127">
    <property type="entry name" value="EF_TS_2"/>
    <property type="match status" value="1"/>
</dbReference>
<protein>
    <recommendedName>
        <fullName evidence="1">Elongation factor Ts</fullName>
        <shortName evidence="1">EF-Ts</shortName>
    </recommendedName>
</protein>
<name>EFTS_PSET1</name>
<reference key="1">
    <citation type="submission" date="2004-02" db="EMBL/GenBank/DDBJ databases">
        <title>The elongation factor Ts from the Antarctic eubacterium Pseudoalteromonas haloplanktis TAC 125: biochemical characterisation and cloning of the encoding gene.</title>
        <authorList>
            <person name="Raimo G."/>
            <person name="Lombardo B."/>
            <person name="Masullo M."/>
            <person name="Longo O."/>
            <person name="Lamberti A."/>
            <person name="Arcari P."/>
        </authorList>
    </citation>
    <scope>NUCLEOTIDE SEQUENCE [GENOMIC DNA]</scope>
</reference>
<reference key="2">
    <citation type="journal article" date="2005" name="Genome Res.">
        <title>Coping with cold: the genome of the versatile marine Antarctica bacterium Pseudoalteromonas haloplanktis TAC125.</title>
        <authorList>
            <person name="Medigue C."/>
            <person name="Krin E."/>
            <person name="Pascal G."/>
            <person name="Barbe V."/>
            <person name="Bernsel A."/>
            <person name="Bertin P.N."/>
            <person name="Cheung F."/>
            <person name="Cruveiller S."/>
            <person name="D'Amico S."/>
            <person name="Duilio A."/>
            <person name="Fang G."/>
            <person name="Feller G."/>
            <person name="Ho C."/>
            <person name="Mangenot S."/>
            <person name="Marino G."/>
            <person name="Nilsson J."/>
            <person name="Parrilli E."/>
            <person name="Rocha E.P.C."/>
            <person name="Rouy Z."/>
            <person name="Sekowska A."/>
            <person name="Tutino M.L."/>
            <person name="Vallenet D."/>
            <person name="von Heijne G."/>
            <person name="Danchin A."/>
        </authorList>
    </citation>
    <scope>NUCLEOTIDE SEQUENCE [LARGE SCALE GENOMIC DNA]</scope>
    <source>
        <strain>TAC 125</strain>
    </source>
</reference>
<accession>P61330</accession>
<accession>Q3IIX5</accession>
<keyword id="KW-0963">Cytoplasm</keyword>
<keyword id="KW-0251">Elongation factor</keyword>
<keyword id="KW-0648">Protein biosynthesis</keyword>
<keyword id="KW-1185">Reference proteome</keyword>
<proteinExistence type="inferred from homology"/>
<sequence length="283" mass="30407">MAVTTALVKELRERTGAGMMDCKKALTETDGDIELAIENMRKSGAAKAAKKAGNIAAEGAIIIKKNGNVAVLVEVNCQTDFVAKDVSFLAFADKVAEAAIADTVTIEDLQAKFEEARVELVTKIGENINVRRLQYITGENLVEYRHGDRIGVVVAGVADEETLKHVAMHVAASSPEYLTPSDVPADVVAKEQQVQIEIAMNEGKSAEIAEKMVVGRMKKFTGEVSLTGQAFIMEPKKTVGEILKEKNATVTSFVRVEVGEGIERKEEDFAAEVAAQIAAAKAK</sequence>
<evidence type="ECO:0000255" key="1">
    <source>
        <dbReference type="HAMAP-Rule" id="MF_00050"/>
    </source>
</evidence>
<evidence type="ECO:0000305" key="2"/>
<gene>
    <name evidence="1" type="primary">tsf</name>
    <name type="ordered locus">PSHAa2035</name>
</gene>
<feature type="chain" id="PRO_0000161064" description="Elongation factor Ts">
    <location>
        <begin position="1"/>
        <end position="283"/>
    </location>
</feature>
<feature type="region of interest" description="Involved in Mg(2+) ion dislocation from EF-Tu" evidence="1">
    <location>
        <begin position="79"/>
        <end position="82"/>
    </location>
</feature>
<feature type="sequence conflict" description="In Ref. 1; CAF32224." evidence="2" ref="1">
    <original>AKAK</original>
    <variation>SSFHHGT</variation>
    <location>
        <begin position="280"/>
        <end position="283"/>
    </location>
</feature>
<organism>
    <name type="scientific">Pseudoalteromonas translucida (strain TAC 125)</name>
    <dbReference type="NCBI Taxonomy" id="326442"/>
    <lineage>
        <taxon>Bacteria</taxon>
        <taxon>Pseudomonadati</taxon>
        <taxon>Pseudomonadota</taxon>
        <taxon>Gammaproteobacteria</taxon>
        <taxon>Alteromonadales</taxon>
        <taxon>Pseudoalteromonadaceae</taxon>
        <taxon>Pseudoalteromonas</taxon>
    </lineage>
</organism>
<comment type="function">
    <text evidence="1">Associates with the EF-Tu.GDP complex and induces the exchange of GDP to GTP. It remains bound to the aminoacyl-tRNA.EF-Tu.GTP complex up to the GTP hydrolysis stage on the ribosome.</text>
</comment>
<comment type="subcellular location">
    <subcellularLocation>
        <location evidence="1">Cytoplasm</location>
    </subcellularLocation>
</comment>
<comment type="similarity">
    <text evidence="1">Belongs to the EF-Ts family.</text>
</comment>